<proteinExistence type="inferred from homology"/>
<feature type="chain" id="PRO_1000077487" description="Inner membrane-spanning protein YciB">
    <location>
        <begin position="1"/>
        <end position="179"/>
    </location>
</feature>
<feature type="transmembrane region" description="Helical" evidence="1">
    <location>
        <begin position="22"/>
        <end position="42"/>
    </location>
</feature>
<feature type="transmembrane region" description="Helical" evidence="1">
    <location>
        <begin position="50"/>
        <end position="70"/>
    </location>
</feature>
<feature type="transmembrane region" description="Helical" evidence="1">
    <location>
        <begin position="76"/>
        <end position="96"/>
    </location>
</feature>
<feature type="transmembrane region" description="Helical" evidence="1">
    <location>
        <begin position="121"/>
        <end position="141"/>
    </location>
</feature>
<feature type="transmembrane region" description="Helical" evidence="1">
    <location>
        <begin position="149"/>
        <end position="169"/>
    </location>
</feature>
<organism>
    <name type="scientific">Escherichia coli (strain ATCC 8739 / DSM 1576 / NBRC 3972 / NCIMB 8545 / WDCM 00012 / Crooks)</name>
    <dbReference type="NCBI Taxonomy" id="481805"/>
    <lineage>
        <taxon>Bacteria</taxon>
        <taxon>Pseudomonadati</taxon>
        <taxon>Pseudomonadota</taxon>
        <taxon>Gammaproteobacteria</taxon>
        <taxon>Enterobacterales</taxon>
        <taxon>Enterobacteriaceae</taxon>
        <taxon>Escherichia</taxon>
    </lineage>
</organism>
<gene>
    <name evidence="1" type="primary">yciB</name>
    <name type="ordered locus">EcolC_2373</name>
</gene>
<reference key="1">
    <citation type="submission" date="2008-02" db="EMBL/GenBank/DDBJ databases">
        <title>Complete sequence of Escherichia coli C str. ATCC 8739.</title>
        <authorList>
            <person name="Copeland A."/>
            <person name="Lucas S."/>
            <person name="Lapidus A."/>
            <person name="Glavina del Rio T."/>
            <person name="Dalin E."/>
            <person name="Tice H."/>
            <person name="Bruce D."/>
            <person name="Goodwin L."/>
            <person name="Pitluck S."/>
            <person name="Kiss H."/>
            <person name="Brettin T."/>
            <person name="Detter J.C."/>
            <person name="Han C."/>
            <person name="Kuske C.R."/>
            <person name="Schmutz J."/>
            <person name="Larimer F."/>
            <person name="Land M."/>
            <person name="Hauser L."/>
            <person name="Kyrpides N."/>
            <person name="Mikhailova N."/>
            <person name="Ingram L."/>
            <person name="Richardson P."/>
        </authorList>
    </citation>
    <scope>NUCLEOTIDE SEQUENCE [LARGE SCALE GENOMIC DNA]</scope>
    <source>
        <strain>ATCC 8739 / DSM 1576 / NBRC 3972 / NCIMB 8545 / WDCM 00012 / Crooks</strain>
    </source>
</reference>
<comment type="function">
    <text evidence="1">Plays a role in cell envelope biogenesis, maintenance of cell envelope integrity and membrane homeostasis.</text>
</comment>
<comment type="subcellular location">
    <subcellularLocation>
        <location evidence="1">Cell inner membrane</location>
        <topology evidence="1">Multi-pass membrane protein</topology>
    </subcellularLocation>
</comment>
<comment type="similarity">
    <text evidence="1">Belongs to the YciB family.</text>
</comment>
<keyword id="KW-0997">Cell inner membrane</keyword>
<keyword id="KW-1003">Cell membrane</keyword>
<keyword id="KW-0472">Membrane</keyword>
<keyword id="KW-0812">Transmembrane</keyword>
<keyword id="KW-1133">Transmembrane helix</keyword>
<accession>B1ITK1</accession>
<sequence>MKQFLDFLPLVVFFAFYKIYDIYAATAALIVATAIVLIYSWVRFRKVEKMALITFVLVVVFGGLTLFFHNDEFIKWKVTVIYALFAGALLVSQWVMKKPLIQRMLGKELTLPQPVWSKLNLAWAVFFILCGLANIYIAFWLPQNIWVNFKVFGLTALTLIFTLLSGIYIYRHMPQEDKS</sequence>
<evidence type="ECO:0000255" key="1">
    <source>
        <dbReference type="HAMAP-Rule" id="MF_00189"/>
    </source>
</evidence>
<name>YCIB_ECOLC</name>
<dbReference type="EMBL" id="CP000946">
    <property type="protein sequence ID" value="ACA78008.1"/>
    <property type="molecule type" value="Genomic_DNA"/>
</dbReference>
<dbReference type="RefSeq" id="WP_000808667.1">
    <property type="nucleotide sequence ID" value="NZ_MTFT01000016.1"/>
</dbReference>
<dbReference type="KEGG" id="ecl:EcolC_2373"/>
<dbReference type="HOGENOM" id="CLU_089554_2_0_6"/>
<dbReference type="GO" id="GO:0005886">
    <property type="term" value="C:plasma membrane"/>
    <property type="evidence" value="ECO:0007669"/>
    <property type="project" value="UniProtKB-SubCell"/>
</dbReference>
<dbReference type="HAMAP" id="MF_00189">
    <property type="entry name" value="YciB"/>
    <property type="match status" value="1"/>
</dbReference>
<dbReference type="InterPro" id="IPR006008">
    <property type="entry name" value="YciB"/>
</dbReference>
<dbReference type="NCBIfam" id="TIGR00997">
    <property type="entry name" value="ispZ"/>
    <property type="match status" value="1"/>
</dbReference>
<dbReference type="NCBIfam" id="NF001324">
    <property type="entry name" value="PRK00259.1-2"/>
    <property type="match status" value="1"/>
</dbReference>
<dbReference type="NCBIfam" id="NF001325">
    <property type="entry name" value="PRK00259.1-3"/>
    <property type="match status" value="1"/>
</dbReference>
<dbReference type="NCBIfam" id="NF001326">
    <property type="entry name" value="PRK00259.1-4"/>
    <property type="match status" value="1"/>
</dbReference>
<dbReference type="PANTHER" id="PTHR36917:SF1">
    <property type="entry name" value="INNER MEMBRANE-SPANNING PROTEIN YCIB"/>
    <property type="match status" value="1"/>
</dbReference>
<dbReference type="PANTHER" id="PTHR36917">
    <property type="entry name" value="INTRACELLULAR SEPTATION PROTEIN A-RELATED"/>
    <property type="match status" value="1"/>
</dbReference>
<dbReference type="Pfam" id="PF04279">
    <property type="entry name" value="IspA"/>
    <property type="match status" value="1"/>
</dbReference>
<protein>
    <recommendedName>
        <fullName evidence="1">Inner membrane-spanning protein YciB</fullName>
    </recommendedName>
</protein>